<keyword id="KW-0997">Cell inner membrane</keyword>
<keyword id="KW-1003">Cell membrane</keyword>
<keyword id="KW-0143">Chaperone</keyword>
<keyword id="KW-0472">Membrane</keyword>
<keyword id="KW-0653">Protein transport</keyword>
<keyword id="KW-0812">Transmembrane</keyword>
<keyword id="KW-1133">Transmembrane helix</keyword>
<keyword id="KW-0813">Transport</keyword>
<feature type="chain" id="PRO_0000124732" description="Membrane protein insertase YidC">
    <location>
        <begin position="1"/>
        <end position="545"/>
    </location>
</feature>
<feature type="transmembrane region" description="Helical" evidence="1">
    <location>
        <begin position="350"/>
        <end position="370"/>
    </location>
</feature>
<feature type="transmembrane region" description="Helical" evidence="1">
    <location>
        <begin position="424"/>
        <end position="444"/>
    </location>
</feature>
<feature type="transmembrane region" description="Helical" evidence="1">
    <location>
        <begin position="461"/>
        <end position="481"/>
    </location>
</feature>
<feature type="transmembrane region" description="Helical" evidence="1">
    <location>
        <begin position="498"/>
        <end position="518"/>
    </location>
</feature>
<gene>
    <name evidence="1" type="primary">yidC</name>
    <name type="ordered locus">NMA0548</name>
</gene>
<comment type="function">
    <text evidence="1">Required for the insertion and/or proper folding and/or complex formation of integral membrane proteins into the membrane. Involved in integration of membrane proteins that insert both dependently and independently of the Sec translocase complex, as well as at least some lipoproteins. Aids folding of multispanning membrane proteins.</text>
</comment>
<comment type="subunit">
    <text evidence="1">Interacts with the Sec translocase complex via SecD. Specifically interacts with transmembrane segments of nascent integral membrane proteins during membrane integration.</text>
</comment>
<comment type="subcellular location">
    <subcellularLocation>
        <location evidence="1">Cell inner membrane</location>
        <topology evidence="1">Multi-pass membrane protein</topology>
    </subcellularLocation>
</comment>
<comment type="similarity">
    <text evidence="1">Belongs to the OXA1/ALB3/YidC family. Type 1 subfamily.</text>
</comment>
<dbReference type="EMBL" id="AL157959">
    <property type="protein sequence ID" value="CAM07824.1"/>
    <property type="molecule type" value="Genomic_DNA"/>
</dbReference>
<dbReference type="PIR" id="D81973">
    <property type="entry name" value="D81973"/>
</dbReference>
<dbReference type="RefSeq" id="WP_002247132.1">
    <property type="nucleotide sequence ID" value="NC_003116.1"/>
</dbReference>
<dbReference type="SMR" id="Q9JW48"/>
<dbReference type="EnsemblBacteria" id="CAM07824">
    <property type="protein sequence ID" value="CAM07824"/>
    <property type="gene ID" value="NMA0548"/>
</dbReference>
<dbReference type="KEGG" id="nma:NMA0548"/>
<dbReference type="HOGENOM" id="CLU_016535_3_0_4"/>
<dbReference type="Proteomes" id="UP000000626">
    <property type="component" value="Chromosome"/>
</dbReference>
<dbReference type="GO" id="GO:0005886">
    <property type="term" value="C:plasma membrane"/>
    <property type="evidence" value="ECO:0007669"/>
    <property type="project" value="UniProtKB-SubCell"/>
</dbReference>
<dbReference type="GO" id="GO:0032977">
    <property type="term" value="F:membrane insertase activity"/>
    <property type="evidence" value="ECO:0007669"/>
    <property type="project" value="InterPro"/>
</dbReference>
<dbReference type="GO" id="GO:0051205">
    <property type="term" value="P:protein insertion into membrane"/>
    <property type="evidence" value="ECO:0007669"/>
    <property type="project" value="TreeGrafter"/>
</dbReference>
<dbReference type="GO" id="GO:0015031">
    <property type="term" value="P:protein transport"/>
    <property type="evidence" value="ECO:0007669"/>
    <property type="project" value="UniProtKB-KW"/>
</dbReference>
<dbReference type="CDD" id="cd20070">
    <property type="entry name" value="5TM_YidC_Alb3"/>
    <property type="match status" value="1"/>
</dbReference>
<dbReference type="CDD" id="cd19961">
    <property type="entry name" value="EcYidC-like_peri"/>
    <property type="match status" value="1"/>
</dbReference>
<dbReference type="FunFam" id="2.70.98.90:FF:000003">
    <property type="entry name" value="Membrane protein insertase YidC"/>
    <property type="match status" value="1"/>
</dbReference>
<dbReference type="Gene3D" id="2.70.98.90">
    <property type="match status" value="1"/>
</dbReference>
<dbReference type="HAMAP" id="MF_01810">
    <property type="entry name" value="YidC_type1"/>
    <property type="match status" value="1"/>
</dbReference>
<dbReference type="InterPro" id="IPR019998">
    <property type="entry name" value="Membr_insert_YidC"/>
</dbReference>
<dbReference type="InterPro" id="IPR028053">
    <property type="entry name" value="Membr_insert_YidC_N"/>
</dbReference>
<dbReference type="InterPro" id="IPR001708">
    <property type="entry name" value="YidC/ALB3/OXA1/COX18"/>
</dbReference>
<dbReference type="InterPro" id="IPR028055">
    <property type="entry name" value="YidC/Oxa/ALB_C"/>
</dbReference>
<dbReference type="InterPro" id="IPR047196">
    <property type="entry name" value="YidC_ALB_C"/>
</dbReference>
<dbReference type="InterPro" id="IPR038221">
    <property type="entry name" value="YidC_periplasmic_sf"/>
</dbReference>
<dbReference type="NCBIfam" id="NF002352">
    <property type="entry name" value="PRK01318.1-3"/>
    <property type="match status" value="1"/>
</dbReference>
<dbReference type="NCBIfam" id="TIGR03593">
    <property type="entry name" value="yidC_nterm"/>
    <property type="match status" value="1"/>
</dbReference>
<dbReference type="NCBIfam" id="TIGR03592">
    <property type="entry name" value="yidC_oxa1_cterm"/>
    <property type="match status" value="1"/>
</dbReference>
<dbReference type="PANTHER" id="PTHR12428:SF65">
    <property type="entry name" value="CYTOCHROME C OXIDASE ASSEMBLY PROTEIN COX18, MITOCHONDRIAL"/>
    <property type="match status" value="1"/>
</dbReference>
<dbReference type="PANTHER" id="PTHR12428">
    <property type="entry name" value="OXA1"/>
    <property type="match status" value="1"/>
</dbReference>
<dbReference type="Pfam" id="PF02096">
    <property type="entry name" value="60KD_IMP"/>
    <property type="match status" value="1"/>
</dbReference>
<dbReference type="Pfam" id="PF14849">
    <property type="entry name" value="YidC_periplas"/>
    <property type="match status" value="1"/>
</dbReference>
<dbReference type="PRINTS" id="PR00701">
    <property type="entry name" value="60KDINNERMP"/>
</dbReference>
<dbReference type="PRINTS" id="PR01900">
    <property type="entry name" value="YIDCPROTEIN"/>
</dbReference>
<organism>
    <name type="scientific">Neisseria meningitidis serogroup A / serotype 4A (strain DSM 15465 / Z2491)</name>
    <dbReference type="NCBI Taxonomy" id="122587"/>
    <lineage>
        <taxon>Bacteria</taxon>
        <taxon>Pseudomonadati</taxon>
        <taxon>Pseudomonadota</taxon>
        <taxon>Betaproteobacteria</taxon>
        <taxon>Neisseriales</taxon>
        <taxon>Neisseriaceae</taxon>
        <taxon>Neisseria</taxon>
    </lineage>
</organism>
<reference key="1">
    <citation type="journal article" date="2000" name="Nature">
        <title>Complete DNA sequence of a serogroup A strain of Neisseria meningitidis Z2491.</title>
        <authorList>
            <person name="Parkhill J."/>
            <person name="Achtman M."/>
            <person name="James K.D."/>
            <person name="Bentley S.D."/>
            <person name="Churcher C.M."/>
            <person name="Klee S.R."/>
            <person name="Morelli G."/>
            <person name="Basham D."/>
            <person name="Brown D."/>
            <person name="Chillingworth T."/>
            <person name="Davies R.M."/>
            <person name="Davis P."/>
            <person name="Devlin K."/>
            <person name="Feltwell T."/>
            <person name="Hamlin N."/>
            <person name="Holroyd S."/>
            <person name="Jagels K."/>
            <person name="Leather S."/>
            <person name="Moule S."/>
            <person name="Mungall K.L."/>
            <person name="Quail M.A."/>
            <person name="Rajandream M.A."/>
            <person name="Rutherford K.M."/>
            <person name="Simmonds M."/>
            <person name="Skelton J."/>
            <person name="Whitehead S."/>
            <person name="Spratt B.G."/>
            <person name="Barrell B.G."/>
        </authorList>
    </citation>
    <scope>NUCLEOTIDE SEQUENCE [LARGE SCALE GENOMIC DNA]</scope>
    <source>
        <strain>DSM 15465 / Z2491</strain>
    </source>
</reference>
<sequence length="545" mass="60712">MDFKRLTAFFAIALVIMIGWEKMFPTPKPVPAPQQTAQQQAVTASAEAALAPATPITVTTDTVQAVIDEKSGDLRRLTLLKYKATGDENKPFILFGDGKEYTYVAQSELLDAQGNNILKGIGFSAPKKQYSLEGDKVEVRLSAPETRGLKIDKVYTFTKGSYLVNVRFDIANGSGQTANLSADYRIVRDHSEPEGQGYFTHSYVGPVVYTPEGNFQKVSFSDLDDDAKSGKSEAEYIRKTPTGWLGMIEHHFMSTWILQPKGGQSVCAAGDCRIDIKRRNDKLYSTSVSVPLAAIQNGAKSEASINLYAGPQTTSVIANIADNLQLAKDYGKVHWFASPLFWLLNQLHNIIGNWGWAIIVLTIIVKAVLYPLTNASYRSMAKMRAAAPKLQAIKEKYGDDRMAQQQAMMQLYTDEKINPLGGCLPMLLQIPVFIGLYWALFASVELRQAPWLGWITDLSRADPYYILPIIMAATMFAQTYLNPPPTDPMQAKMMKIMPLVFSVMFFFFPAGLVLYWVINNLLTIAQQWHINRSIEKQRAQGEVVS</sequence>
<proteinExistence type="inferred from homology"/>
<protein>
    <recommendedName>
        <fullName evidence="1">Membrane protein insertase YidC</fullName>
    </recommendedName>
    <alternativeName>
        <fullName evidence="1">Foldase YidC</fullName>
    </alternativeName>
    <alternativeName>
        <fullName evidence="1">Membrane integrase YidC</fullName>
    </alternativeName>
    <alternativeName>
        <fullName evidence="1">Membrane protein YidC</fullName>
    </alternativeName>
</protein>
<name>YIDC_NEIMA</name>
<evidence type="ECO:0000255" key="1">
    <source>
        <dbReference type="HAMAP-Rule" id="MF_01810"/>
    </source>
</evidence>
<accession>Q9JW48</accession>
<accession>A1IPZ9</accession>